<evidence type="ECO:0000250" key="1"/>
<evidence type="ECO:0000305" key="2"/>
<gene>
    <name type="primary">ribB</name>
    <name type="ordered locus">PA4054</name>
</gene>
<organism>
    <name type="scientific">Pseudomonas aeruginosa (strain ATCC 15692 / DSM 22644 / CIP 104116 / JCM 14847 / LMG 12228 / 1C / PRS 101 / PAO1)</name>
    <dbReference type="NCBI Taxonomy" id="208964"/>
    <lineage>
        <taxon>Bacteria</taxon>
        <taxon>Pseudomonadati</taxon>
        <taxon>Pseudomonadota</taxon>
        <taxon>Gammaproteobacteria</taxon>
        <taxon>Pseudomonadales</taxon>
        <taxon>Pseudomonadaceae</taxon>
        <taxon>Pseudomonas</taxon>
    </lineage>
</organism>
<proteinExistence type="inferred from homology"/>
<protein>
    <recommendedName>
        <fullName>3,4-dihydroxy-2-butanone 4-phosphate synthase</fullName>
        <shortName>DHBP synthase</shortName>
        <ecNumber>4.1.99.12</ecNumber>
    </recommendedName>
</protein>
<feature type="chain" id="PRO_0000151731" description="3,4-dihydroxy-2-butanone 4-phosphate synthase">
    <location>
        <begin position="1"/>
        <end position="365"/>
    </location>
</feature>
<feature type="region of interest" description="DHBP synthase">
    <location>
        <begin position="1"/>
        <end position="201"/>
    </location>
</feature>
<feature type="region of interest" description="GTP cyclohydrolase II-like">
    <location>
        <begin position="202"/>
        <end position="365"/>
    </location>
</feature>
<feature type="binding site" evidence="1">
    <location>
        <begin position="27"/>
        <end position="28"/>
    </location>
    <ligand>
        <name>D-ribulose 5-phosphate</name>
        <dbReference type="ChEBI" id="CHEBI:58121"/>
    </ligand>
</feature>
<feature type="binding site" evidence="1">
    <location>
        <position position="28"/>
    </location>
    <ligand>
        <name>Mg(2+)</name>
        <dbReference type="ChEBI" id="CHEBI:18420"/>
        <label>1</label>
    </ligand>
</feature>
<feature type="binding site" evidence="1">
    <location>
        <position position="28"/>
    </location>
    <ligand>
        <name>Mg(2+)</name>
        <dbReference type="ChEBI" id="CHEBI:18420"/>
        <label>2</label>
    </ligand>
</feature>
<feature type="binding site" evidence="1">
    <location>
        <position position="32"/>
    </location>
    <ligand>
        <name>D-ribulose 5-phosphate</name>
        <dbReference type="ChEBI" id="CHEBI:58121"/>
    </ligand>
</feature>
<feature type="binding site" evidence="1">
    <location>
        <begin position="140"/>
        <end position="144"/>
    </location>
    <ligand>
        <name>D-ribulose 5-phosphate</name>
        <dbReference type="ChEBI" id="CHEBI:58121"/>
    </ligand>
</feature>
<feature type="binding site" evidence="1">
    <location>
        <position position="143"/>
    </location>
    <ligand>
        <name>Mg(2+)</name>
        <dbReference type="ChEBI" id="CHEBI:18420"/>
        <label>2</label>
    </ligand>
</feature>
<feature type="binding site" evidence="1">
    <location>
        <position position="164"/>
    </location>
    <ligand>
        <name>D-ribulose 5-phosphate</name>
        <dbReference type="ChEBI" id="CHEBI:58121"/>
    </ligand>
</feature>
<feature type="site" description="Essential for catalytic activity" evidence="1">
    <location>
        <position position="126"/>
    </location>
</feature>
<feature type="site" description="Essential for catalytic activity" evidence="1">
    <location>
        <position position="164"/>
    </location>
</feature>
<dbReference type="EC" id="4.1.99.12"/>
<dbReference type="EMBL" id="AE004091">
    <property type="protein sequence ID" value="AAG07441.1"/>
    <property type="molecule type" value="Genomic_DNA"/>
</dbReference>
<dbReference type="PIR" id="F83137">
    <property type="entry name" value="F83137"/>
</dbReference>
<dbReference type="RefSeq" id="NP_252743.1">
    <property type="nucleotide sequence ID" value="NC_002516.2"/>
</dbReference>
<dbReference type="SMR" id="Q9HWX4"/>
<dbReference type="FunCoup" id="Q9HWX4">
    <property type="interactions" value="504"/>
</dbReference>
<dbReference type="STRING" id="208964.PA4054"/>
<dbReference type="PaxDb" id="208964-PA4054"/>
<dbReference type="GeneID" id="878914"/>
<dbReference type="KEGG" id="pae:PA4054"/>
<dbReference type="PATRIC" id="fig|208964.12.peg.4245"/>
<dbReference type="PseudoCAP" id="PA4054"/>
<dbReference type="HOGENOM" id="CLU_020273_1_2_6"/>
<dbReference type="InParanoid" id="Q9HWX4"/>
<dbReference type="OrthoDB" id="9793111at2"/>
<dbReference type="PhylomeDB" id="Q9HWX4"/>
<dbReference type="BioCyc" id="PAER208964:G1FZ6-4127-MONOMER"/>
<dbReference type="UniPathway" id="UPA00275">
    <property type="reaction ID" value="UER00399"/>
</dbReference>
<dbReference type="Proteomes" id="UP000002438">
    <property type="component" value="Chromosome"/>
</dbReference>
<dbReference type="GO" id="GO:0005829">
    <property type="term" value="C:cytosol"/>
    <property type="evidence" value="ECO:0000318"/>
    <property type="project" value="GO_Central"/>
</dbReference>
<dbReference type="GO" id="GO:0008686">
    <property type="term" value="F:3,4-dihydroxy-2-butanone-4-phosphate synthase activity"/>
    <property type="evidence" value="ECO:0007669"/>
    <property type="project" value="UniProtKB-UniRule"/>
</dbReference>
<dbReference type="GO" id="GO:0003935">
    <property type="term" value="F:GTP cyclohydrolase II activity"/>
    <property type="evidence" value="ECO:0000318"/>
    <property type="project" value="GO_Central"/>
</dbReference>
<dbReference type="GO" id="GO:0000287">
    <property type="term" value="F:magnesium ion binding"/>
    <property type="evidence" value="ECO:0007669"/>
    <property type="project" value="UniProtKB-UniRule"/>
</dbReference>
<dbReference type="GO" id="GO:0030145">
    <property type="term" value="F:manganese ion binding"/>
    <property type="evidence" value="ECO:0007669"/>
    <property type="project" value="UniProtKB-UniRule"/>
</dbReference>
<dbReference type="GO" id="GO:0009231">
    <property type="term" value="P:riboflavin biosynthetic process"/>
    <property type="evidence" value="ECO:0000318"/>
    <property type="project" value="GO_Central"/>
</dbReference>
<dbReference type="FunFam" id="3.90.870.10:FF:000001">
    <property type="entry name" value="Riboflavin biosynthesis protein RibBA"/>
    <property type="match status" value="1"/>
</dbReference>
<dbReference type="Gene3D" id="3.90.870.10">
    <property type="entry name" value="DHBP synthase"/>
    <property type="match status" value="1"/>
</dbReference>
<dbReference type="Gene3D" id="3.40.50.10990">
    <property type="entry name" value="GTP cyclohydrolase II"/>
    <property type="match status" value="1"/>
</dbReference>
<dbReference type="HAMAP" id="MF_00180">
    <property type="entry name" value="RibB"/>
    <property type="match status" value="1"/>
</dbReference>
<dbReference type="InterPro" id="IPR017945">
    <property type="entry name" value="DHBP_synth_RibB-like_a/b_dom"/>
</dbReference>
<dbReference type="InterPro" id="IPR000422">
    <property type="entry name" value="DHBP_synthase_RibB"/>
</dbReference>
<dbReference type="InterPro" id="IPR032677">
    <property type="entry name" value="GTP_cyclohydro_II"/>
</dbReference>
<dbReference type="InterPro" id="IPR036144">
    <property type="entry name" value="RibA-like_sf"/>
</dbReference>
<dbReference type="NCBIfam" id="NF010626">
    <property type="entry name" value="PRK14019.1"/>
    <property type="match status" value="1"/>
</dbReference>
<dbReference type="NCBIfam" id="TIGR00506">
    <property type="entry name" value="ribB"/>
    <property type="match status" value="1"/>
</dbReference>
<dbReference type="PANTHER" id="PTHR21327:SF34">
    <property type="entry name" value="3,4-DIHYDROXY-2-BUTANONE 4-PHOSPHATE SYNTHASE"/>
    <property type="match status" value="1"/>
</dbReference>
<dbReference type="PANTHER" id="PTHR21327">
    <property type="entry name" value="GTP CYCLOHYDROLASE II-RELATED"/>
    <property type="match status" value="1"/>
</dbReference>
<dbReference type="Pfam" id="PF00926">
    <property type="entry name" value="DHBP_synthase"/>
    <property type="match status" value="1"/>
</dbReference>
<dbReference type="Pfam" id="PF00925">
    <property type="entry name" value="GTP_cyclohydro2"/>
    <property type="match status" value="1"/>
</dbReference>
<dbReference type="PIRSF" id="PIRSF001259">
    <property type="entry name" value="RibA"/>
    <property type="match status" value="1"/>
</dbReference>
<dbReference type="SUPFAM" id="SSF142695">
    <property type="entry name" value="RibA-like"/>
    <property type="match status" value="1"/>
</dbReference>
<dbReference type="SUPFAM" id="SSF55821">
    <property type="entry name" value="YrdC/RibB"/>
    <property type="match status" value="1"/>
</dbReference>
<sequence length="365" mass="39438">MALNTIDELIEDIRQGKMVILMDDEDRENEGDLIMAAECVRTEDINFMVKHARGLVCMPMTRERCERLGLPLMVQRNGSGFGTKFTVSIEAAEGVTTGISAADRARTVQAAAAKNAVAADIVSPGHIFPLMAQPGGTLARAGHTEAACDLARMAGFEPSGVICEVMNDDGSMARRPELEAFAAEHGIKIGTIADLIHYRLIHERTVERIAEQPLDSELGHFNLITYRDSVEGDVHLALTLGKVCAEEPTLVRVHNMDPLRDLLQVNQPGRWSLRAAMTKVAEAGSGVVLLLGHQIGGDDLLAHVREIASAPAPAPKATTTYSTVGAGSQILRDLGVRKMRLLSAPMRFNAISGFDLEVVEYLPAE</sequence>
<accession>Q9HWX4</accession>
<reference key="1">
    <citation type="journal article" date="2000" name="Nature">
        <title>Complete genome sequence of Pseudomonas aeruginosa PAO1, an opportunistic pathogen.</title>
        <authorList>
            <person name="Stover C.K."/>
            <person name="Pham X.-Q.T."/>
            <person name="Erwin A.L."/>
            <person name="Mizoguchi S.D."/>
            <person name="Warrener P."/>
            <person name="Hickey M.J."/>
            <person name="Brinkman F.S.L."/>
            <person name="Hufnagle W.O."/>
            <person name="Kowalik D.J."/>
            <person name="Lagrou M."/>
            <person name="Garber R.L."/>
            <person name="Goltry L."/>
            <person name="Tolentino E."/>
            <person name="Westbrock-Wadman S."/>
            <person name="Yuan Y."/>
            <person name="Brody L.L."/>
            <person name="Coulter S.N."/>
            <person name="Folger K.R."/>
            <person name="Kas A."/>
            <person name="Larbig K."/>
            <person name="Lim R.M."/>
            <person name="Smith K.A."/>
            <person name="Spencer D.H."/>
            <person name="Wong G.K.-S."/>
            <person name="Wu Z."/>
            <person name="Paulsen I.T."/>
            <person name="Reizer J."/>
            <person name="Saier M.H. Jr."/>
            <person name="Hancock R.E.W."/>
            <person name="Lory S."/>
            <person name="Olson M.V."/>
        </authorList>
    </citation>
    <scope>NUCLEOTIDE SEQUENCE [LARGE SCALE GENOMIC DNA]</scope>
    <source>
        <strain>ATCC 15692 / DSM 22644 / CIP 104116 / JCM 14847 / LMG 12228 / 1C / PRS 101 / PAO1</strain>
    </source>
</reference>
<name>RIBB_PSEAE</name>
<comment type="function">
    <text evidence="1">Catalyzes the conversion of D-ribulose 5-phosphate to formate and 3,4-dihydroxy-2-butanone 4-phosphate.</text>
</comment>
<comment type="catalytic activity">
    <reaction>
        <text>D-ribulose 5-phosphate = (2S)-2-hydroxy-3-oxobutyl phosphate + formate + H(+)</text>
        <dbReference type="Rhea" id="RHEA:18457"/>
        <dbReference type="ChEBI" id="CHEBI:15378"/>
        <dbReference type="ChEBI" id="CHEBI:15740"/>
        <dbReference type="ChEBI" id="CHEBI:58121"/>
        <dbReference type="ChEBI" id="CHEBI:58830"/>
        <dbReference type="EC" id="4.1.99.12"/>
    </reaction>
</comment>
<comment type="cofactor">
    <cofactor evidence="1">
        <name>Mg(2+)</name>
        <dbReference type="ChEBI" id="CHEBI:18420"/>
    </cofactor>
    <cofactor evidence="1">
        <name>Mn(2+)</name>
        <dbReference type="ChEBI" id="CHEBI:29035"/>
    </cofactor>
    <text evidence="1">Binds 2 divalent metal cations per subunit. Magnesium or manganese.</text>
</comment>
<comment type="pathway">
    <text>Cofactor biosynthesis; riboflavin biosynthesis; 2-hydroxy-3-oxobutyl phosphate from D-ribulose 5-phosphate: step 1/1.</text>
</comment>
<comment type="similarity">
    <text evidence="2">In the N-terminal section; belongs to the DHBP synthase family.</text>
</comment>
<comment type="similarity">
    <text evidence="2">In the C-terminal section; belongs to the GTP cyclohydrolase II family.</text>
</comment>
<keyword id="KW-0456">Lyase</keyword>
<keyword id="KW-0460">Magnesium</keyword>
<keyword id="KW-0464">Manganese</keyword>
<keyword id="KW-0479">Metal-binding</keyword>
<keyword id="KW-1185">Reference proteome</keyword>
<keyword id="KW-0686">Riboflavin biosynthesis</keyword>